<keyword id="KW-1185">Reference proteome</keyword>
<gene>
    <name type="primary">yusN</name>
    <name type="ordered locus">BSU32860</name>
</gene>
<feature type="chain" id="PRO_0000360190" description="Uncharacterized protein YusN">
    <location>
        <begin position="1"/>
        <end position="110"/>
    </location>
</feature>
<feature type="region of interest" description="Disordered" evidence="1">
    <location>
        <begin position="1"/>
        <end position="24"/>
    </location>
</feature>
<feature type="compositionally biased region" description="Polar residues" evidence="1">
    <location>
        <begin position="1"/>
        <end position="20"/>
    </location>
</feature>
<sequence>MNQQNQKISNPQTPVPTTSEMNDRDFVNELLTTEKYMTTAYCTALHEFSHESLYQDIQSIFDESQKAQRKLYDLMFQYGWYSVEAEDSQKLQQSYQKFQQTIQQQSPYQQ</sequence>
<proteinExistence type="predicted"/>
<name>YUSN_BACSU</name>
<evidence type="ECO:0000256" key="1">
    <source>
        <dbReference type="SAM" id="MobiDB-lite"/>
    </source>
</evidence>
<accession>O32180</accession>
<organism>
    <name type="scientific">Bacillus subtilis (strain 168)</name>
    <dbReference type="NCBI Taxonomy" id="224308"/>
    <lineage>
        <taxon>Bacteria</taxon>
        <taxon>Bacillati</taxon>
        <taxon>Bacillota</taxon>
        <taxon>Bacilli</taxon>
        <taxon>Bacillales</taxon>
        <taxon>Bacillaceae</taxon>
        <taxon>Bacillus</taxon>
    </lineage>
</organism>
<protein>
    <recommendedName>
        <fullName>Uncharacterized protein YusN</fullName>
    </recommendedName>
</protein>
<reference key="1">
    <citation type="journal article" date="1997" name="Nature">
        <title>The complete genome sequence of the Gram-positive bacterium Bacillus subtilis.</title>
        <authorList>
            <person name="Kunst F."/>
            <person name="Ogasawara N."/>
            <person name="Moszer I."/>
            <person name="Albertini A.M."/>
            <person name="Alloni G."/>
            <person name="Azevedo V."/>
            <person name="Bertero M.G."/>
            <person name="Bessieres P."/>
            <person name="Bolotin A."/>
            <person name="Borchert S."/>
            <person name="Borriss R."/>
            <person name="Boursier L."/>
            <person name="Brans A."/>
            <person name="Braun M."/>
            <person name="Brignell S.C."/>
            <person name="Bron S."/>
            <person name="Brouillet S."/>
            <person name="Bruschi C.V."/>
            <person name="Caldwell B."/>
            <person name="Capuano V."/>
            <person name="Carter N.M."/>
            <person name="Choi S.-K."/>
            <person name="Codani J.-J."/>
            <person name="Connerton I.F."/>
            <person name="Cummings N.J."/>
            <person name="Daniel R.A."/>
            <person name="Denizot F."/>
            <person name="Devine K.M."/>
            <person name="Duesterhoeft A."/>
            <person name="Ehrlich S.D."/>
            <person name="Emmerson P.T."/>
            <person name="Entian K.-D."/>
            <person name="Errington J."/>
            <person name="Fabret C."/>
            <person name="Ferrari E."/>
            <person name="Foulger D."/>
            <person name="Fritz C."/>
            <person name="Fujita M."/>
            <person name="Fujita Y."/>
            <person name="Fuma S."/>
            <person name="Galizzi A."/>
            <person name="Galleron N."/>
            <person name="Ghim S.-Y."/>
            <person name="Glaser P."/>
            <person name="Goffeau A."/>
            <person name="Golightly E.J."/>
            <person name="Grandi G."/>
            <person name="Guiseppi G."/>
            <person name="Guy B.J."/>
            <person name="Haga K."/>
            <person name="Haiech J."/>
            <person name="Harwood C.R."/>
            <person name="Henaut A."/>
            <person name="Hilbert H."/>
            <person name="Holsappel S."/>
            <person name="Hosono S."/>
            <person name="Hullo M.-F."/>
            <person name="Itaya M."/>
            <person name="Jones L.-M."/>
            <person name="Joris B."/>
            <person name="Karamata D."/>
            <person name="Kasahara Y."/>
            <person name="Klaerr-Blanchard M."/>
            <person name="Klein C."/>
            <person name="Kobayashi Y."/>
            <person name="Koetter P."/>
            <person name="Koningstein G."/>
            <person name="Krogh S."/>
            <person name="Kumano M."/>
            <person name="Kurita K."/>
            <person name="Lapidus A."/>
            <person name="Lardinois S."/>
            <person name="Lauber J."/>
            <person name="Lazarevic V."/>
            <person name="Lee S.-M."/>
            <person name="Levine A."/>
            <person name="Liu H."/>
            <person name="Masuda S."/>
            <person name="Mauel C."/>
            <person name="Medigue C."/>
            <person name="Medina N."/>
            <person name="Mellado R.P."/>
            <person name="Mizuno M."/>
            <person name="Moestl D."/>
            <person name="Nakai S."/>
            <person name="Noback M."/>
            <person name="Noone D."/>
            <person name="O'Reilly M."/>
            <person name="Ogawa K."/>
            <person name="Ogiwara A."/>
            <person name="Oudega B."/>
            <person name="Park S.-H."/>
            <person name="Parro V."/>
            <person name="Pohl T.M."/>
            <person name="Portetelle D."/>
            <person name="Porwollik S."/>
            <person name="Prescott A.M."/>
            <person name="Presecan E."/>
            <person name="Pujic P."/>
            <person name="Purnelle B."/>
            <person name="Rapoport G."/>
            <person name="Rey M."/>
            <person name="Reynolds S."/>
            <person name="Rieger M."/>
            <person name="Rivolta C."/>
            <person name="Rocha E."/>
            <person name="Roche B."/>
            <person name="Rose M."/>
            <person name="Sadaie Y."/>
            <person name="Sato T."/>
            <person name="Scanlan E."/>
            <person name="Schleich S."/>
            <person name="Schroeter R."/>
            <person name="Scoffone F."/>
            <person name="Sekiguchi J."/>
            <person name="Sekowska A."/>
            <person name="Seror S.J."/>
            <person name="Serror P."/>
            <person name="Shin B.-S."/>
            <person name="Soldo B."/>
            <person name="Sorokin A."/>
            <person name="Tacconi E."/>
            <person name="Takagi T."/>
            <person name="Takahashi H."/>
            <person name="Takemaru K."/>
            <person name="Takeuchi M."/>
            <person name="Tamakoshi A."/>
            <person name="Tanaka T."/>
            <person name="Terpstra P."/>
            <person name="Tognoni A."/>
            <person name="Tosato V."/>
            <person name="Uchiyama S."/>
            <person name="Vandenbol M."/>
            <person name="Vannier F."/>
            <person name="Vassarotti A."/>
            <person name="Viari A."/>
            <person name="Wambutt R."/>
            <person name="Wedler E."/>
            <person name="Wedler H."/>
            <person name="Weitzenegger T."/>
            <person name="Winters P."/>
            <person name="Wipat A."/>
            <person name="Yamamoto H."/>
            <person name="Yamane K."/>
            <person name="Yasumoto K."/>
            <person name="Yata K."/>
            <person name="Yoshida K."/>
            <person name="Yoshikawa H.-F."/>
            <person name="Zumstein E."/>
            <person name="Yoshikawa H."/>
            <person name="Danchin A."/>
        </authorList>
    </citation>
    <scope>NUCLEOTIDE SEQUENCE [LARGE SCALE GENOMIC DNA]</scope>
    <source>
        <strain>168</strain>
    </source>
</reference>
<dbReference type="EMBL" id="AL009126">
    <property type="protein sequence ID" value="CAB15275.1"/>
    <property type="molecule type" value="Genomic_DNA"/>
</dbReference>
<dbReference type="PIR" id="G70021">
    <property type="entry name" value="G70021"/>
</dbReference>
<dbReference type="RefSeq" id="NP_391165.1">
    <property type="nucleotide sequence ID" value="NC_000964.3"/>
</dbReference>
<dbReference type="RefSeq" id="WP_003228564.1">
    <property type="nucleotide sequence ID" value="NZ_OZ025638.1"/>
</dbReference>
<dbReference type="SMR" id="O32180"/>
<dbReference type="FunCoup" id="O32180">
    <property type="interactions" value="84"/>
</dbReference>
<dbReference type="STRING" id="224308.BSU32860"/>
<dbReference type="PaxDb" id="224308-BSU32860"/>
<dbReference type="EnsemblBacteria" id="CAB15275">
    <property type="protein sequence ID" value="CAB15275"/>
    <property type="gene ID" value="BSU_32860"/>
</dbReference>
<dbReference type="GeneID" id="937194"/>
<dbReference type="KEGG" id="bsu:BSU32860"/>
<dbReference type="PATRIC" id="fig|224308.179.peg.3562"/>
<dbReference type="eggNOG" id="COG5577">
    <property type="taxonomic scope" value="Bacteria"/>
</dbReference>
<dbReference type="InParanoid" id="O32180"/>
<dbReference type="OrthoDB" id="1647790at2"/>
<dbReference type="BioCyc" id="BSUB:BSU32860-MONOMER"/>
<dbReference type="Proteomes" id="UP000001570">
    <property type="component" value="Chromosome"/>
</dbReference>
<dbReference type="InterPro" id="IPR012851">
    <property type="entry name" value="Spore_coat_CotF-like"/>
</dbReference>
<dbReference type="Pfam" id="PF07875">
    <property type="entry name" value="Coat_F"/>
    <property type="match status" value="1"/>
</dbReference>